<proteinExistence type="inferred from homology"/>
<sequence>MVESQKAMPQPKMGRIRRIHFVGIGGVGMCGIAEVLLNLGYEVSGSDLKASPVTERLESFGAEIFVGHRAENAATADVLVVSSAINPANPEVATALERRIPVVPRAEMLAELMRYRHGVAVAGTHGKTTTTSLLASVFAAGGLDPTFVIGGRLTAAGTNAQLGTSRYLIAEADESDASFLHLQPMVAVVTNIDADHMATYEGDFNKLKKTFVEFLHNLPFYGLAVMCLDDPVVREILPQVKRPTVTYGFSEEADIRAINVRQQGMQTHFTVLRRDREPLEVSVNMPGNHNVLNALATIAIATDEGITDEAIVQGLSGFQGVGRRFQVYGELPVEGGSVMLVDDYGHHPTEVAAVIKAVRGGWPSRRLVIVYQPHRYSRTRDLYDDFVQVLGDANVLLLMEVYPAGEEPIPGADSRQLCHSIRQRGKLDPIYIERGVELAPLVKPLLRAGDILICQGAGDVGGLAPQLMKSPLFAGAKQEKSK</sequence>
<evidence type="ECO:0000255" key="1">
    <source>
        <dbReference type="HAMAP-Rule" id="MF_00046"/>
    </source>
</evidence>
<accession>A5W8P9</accession>
<reference key="1">
    <citation type="submission" date="2007-05" db="EMBL/GenBank/DDBJ databases">
        <title>Complete sequence of Pseudomonas putida F1.</title>
        <authorList>
            <consortium name="US DOE Joint Genome Institute"/>
            <person name="Copeland A."/>
            <person name="Lucas S."/>
            <person name="Lapidus A."/>
            <person name="Barry K."/>
            <person name="Detter J.C."/>
            <person name="Glavina del Rio T."/>
            <person name="Hammon N."/>
            <person name="Israni S."/>
            <person name="Dalin E."/>
            <person name="Tice H."/>
            <person name="Pitluck S."/>
            <person name="Chain P."/>
            <person name="Malfatti S."/>
            <person name="Shin M."/>
            <person name="Vergez L."/>
            <person name="Schmutz J."/>
            <person name="Larimer F."/>
            <person name="Land M."/>
            <person name="Hauser L."/>
            <person name="Kyrpides N."/>
            <person name="Lykidis A."/>
            <person name="Parales R."/>
            <person name="Richardson P."/>
        </authorList>
    </citation>
    <scope>NUCLEOTIDE SEQUENCE [LARGE SCALE GENOMIC DNA]</scope>
    <source>
        <strain>ATCC 700007 / DSM 6899 / JCM 31910 / BCRC 17059 / LMG 24140 / F1</strain>
    </source>
</reference>
<keyword id="KW-0067">ATP-binding</keyword>
<keyword id="KW-0131">Cell cycle</keyword>
<keyword id="KW-0132">Cell division</keyword>
<keyword id="KW-0133">Cell shape</keyword>
<keyword id="KW-0961">Cell wall biogenesis/degradation</keyword>
<keyword id="KW-0963">Cytoplasm</keyword>
<keyword id="KW-0436">Ligase</keyword>
<keyword id="KW-0547">Nucleotide-binding</keyword>
<keyword id="KW-0573">Peptidoglycan synthesis</keyword>
<comment type="function">
    <text evidence="1">Cell wall formation.</text>
</comment>
<comment type="catalytic activity">
    <reaction evidence="1">
        <text>UDP-N-acetyl-alpha-D-muramate + L-alanine + ATP = UDP-N-acetyl-alpha-D-muramoyl-L-alanine + ADP + phosphate + H(+)</text>
        <dbReference type="Rhea" id="RHEA:23372"/>
        <dbReference type="ChEBI" id="CHEBI:15378"/>
        <dbReference type="ChEBI" id="CHEBI:30616"/>
        <dbReference type="ChEBI" id="CHEBI:43474"/>
        <dbReference type="ChEBI" id="CHEBI:57972"/>
        <dbReference type="ChEBI" id="CHEBI:70757"/>
        <dbReference type="ChEBI" id="CHEBI:83898"/>
        <dbReference type="ChEBI" id="CHEBI:456216"/>
        <dbReference type="EC" id="6.3.2.8"/>
    </reaction>
</comment>
<comment type="pathway">
    <text evidence="1">Cell wall biogenesis; peptidoglycan biosynthesis.</text>
</comment>
<comment type="subcellular location">
    <subcellularLocation>
        <location evidence="1">Cytoplasm</location>
    </subcellularLocation>
</comment>
<comment type="similarity">
    <text evidence="1">Belongs to the MurCDEF family.</text>
</comment>
<dbReference type="EC" id="6.3.2.8" evidence="1"/>
<dbReference type="EMBL" id="CP000712">
    <property type="protein sequence ID" value="ABQ80509.1"/>
    <property type="molecule type" value="Genomic_DNA"/>
</dbReference>
<dbReference type="SMR" id="A5W8P9"/>
<dbReference type="KEGG" id="ppf:Pput_4386"/>
<dbReference type="eggNOG" id="COG0773">
    <property type="taxonomic scope" value="Bacteria"/>
</dbReference>
<dbReference type="HOGENOM" id="CLU_028104_2_2_6"/>
<dbReference type="UniPathway" id="UPA00219"/>
<dbReference type="GO" id="GO:0005737">
    <property type="term" value="C:cytoplasm"/>
    <property type="evidence" value="ECO:0007669"/>
    <property type="project" value="UniProtKB-SubCell"/>
</dbReference>
<dbReference type="GO" id="GO:0005524">
    <property type="term" value="F:ATP binding"/>
    <property type="evidence" value="ECO:0007669"/>
    <property type="project" value="UniProtKB-UniRule"/>
</dbReference>
<dbReference type="GO" id="GO:0008763">
    <property type="term" value="F:UDP-N-acetylmuramate-L-alanine ligase activity"/>
    <property type="evidence" value="ECO:0007669"/>
    <property type="project" value="UniProtKB-UniRule"/>
</dbReference>
<dbReference type="GO" id="GO:0051301">
    <property type="term" value="P:cell division"/>
    <property type="evidence" value="ECO:0007669"/>
    <property type="project" value="UniProtKB-KW"/>
</dbReference>
<dbReference type="GO" id="GO:0071555">
    <property type="term" value="P:cell wall organization"/>
    <property type="evidence" value="ECO:0007669"/>
    <property type="project" value="UniProtKB-KW"/>
</dbReference>
<dbReference type="GO" id="GO:0009252">
    <property type="term" value="P:peptidoglycan biosynthetic process"/>
    <property type="evidence" value="ECO:0007669"/>
    <property type="project" value="UniProtKB-UniRule"/>
</dbReference>
<dbReference type="GO" id="GO:0008360">
    <property type="term" value="P:regulation of cell shape"/>
    <property type="evidence" value="ECO:0007669"/>
    <property type="project" value="UniProtKB-KW"/>
</dbReference>
<dbReference type="FunFam" id="3.40.1190.10:FF:000001">
    <property type="entry name" value="UDP-N-acetylmuramate--L-alanine ligase"/>
    <property type="match status" value="1"/>
</dbReference>
<dbReference type="Gene3D" id="3.90.190.20">
    <property type="entry name" value="Mur ligase, C-terminal domain"/>
    <property type="match status" value="1"/>
</dbReference>
<dbReference type="Gene3D" id="3.40.1190.10">
    <property type="entry name" value="Mur-like, catalytic domain"/>
    <property type="match status" value="1"/>
</dbReference>
<dbReference type="Gene3D" id="3.40.50.720">
    <property type="entry name" value="NAD(P)-binding Rossmann-like Domain"/>
    <property type="match status" value="1"/>
</dbReference>
<dbReference type="HAMAP" id="MF_00046">
    <property type="entry name" value="MurC"/>
    <property type="match status" value="1"/>
</dbReference>
<dbReference type="InterPro" id="IPR036565">
    <property type="entry name" value="Mur-like_cat_sf"/>
</dbReference>
<dbReference type="InterPro" id="IPR004101">
    <property type="entry name" value="Mur_ligase_C"/>
</dbReference>
<dbReference type="InterPro" id="IPR036615">
    <property type="entry name" value="Mur_ligase_C_dom_sf"/>
</dbReference>
<dbReference type="InterPro" id="IPR013221">
    <property type="entry name" value="Mur_ligase_cen"/>
</dbReference>
<dbReference type="InterPro" id="IPR000713">
    <property type="entry name" value="Mur_ligase_N"/>
</dbReference>
<dbReference type="InterPro" id="IPR050061">
    <property type="entry name" value="MurCDEF_pg_biosynth"/>
</dbReference>
<dbReference type="InterPro" id="IPR005758">
    <property type="entry name" value="UDP-N-AcMur_Ala_ligase_MurC"/>
</dbReference>
<dbReference type="NCBIfam" id="TIGR01082">
    <property type="entry name" value="murC"/>
    <property type="match status" value="1"/>
</dbReference>
<dbReference type="PANTHER" id="PTHR43445:SF3">
    <property type="entry name" value="UDP-N-ACETYLMURAMATE--L-ALANINE LIGASE"/>
    <property type="match status" value="1"/>
</dbReference>
<dbReference type="PANTHER" id="PTHR43445">
    <property type="entry name" value="UDP-N-ACETYLMURAMATE--L-ALANINE LIGASE-RELATED"/>
    <property type="match status" value="1"/>
</dbReference>
<dbReference type="Pfam" id="PF01225">
    <property type="entry name" value="Mur_ligase"/>
    <property type="match status" value="1"/>
</dbReference>
<dbReference type="Pfam" id="PF02875">
    <property type="entry name" value="Mur_ligase_C"/>
    <property type="match status" value="1"/>
</dbReference>
<dbReference type="Pfam" id="PF08245">
    <property type="entry name" value="Mur_ligase_M"/>
    <property type="match status" value="1"/>
</dbReference>
<dbReference type="SUPFAM" id="SSF51984">
    <property type="entry name" value="MurCD N-terminal domain"/>
    <property type="match status" value="1"/>
</dbReference>
<dbReference type="SUPFAM" id="SSF53623">
    <property type="entry name" value="MurD-like peptide ligases, catalytic domain"/>
    <property type="match status" value="1"/>
</dbReference>
<dbReference type="SUPFAM" id="SSF53244">
    <property type="entry name" value="MurD-like peptide ligases, peptide-binding domain"/>
    <property type="match status" value="1"/>
</dbReference>
<feature type="chain" id="PRO_1000004389" description="UDP-N-acetylmuramate--L-alanine ligase">
    <location>
        <begin position="1"/>
        <end position="482"/>
    </location>
</feature>
<feature type="binding site" evidence="1">
    <location>
        <begin position="123"/>
        <end position="129"/>
    </location>
    <ligand>
        <name>ATP</name>
        <dbReference type="ChEBI" id="CHEBI:30616"/>
    </ligand>
</feature>
<name>MURC_PSEP1</name>
<protein>
    <recommendedName>
        <fullName evidence="1">UDP-N-acetylmuramate--L-alanine ligase</fullName>
        <ecNumber evidence="1">6.3.2.8</ecNumber>
    </recommendedName>
    <alternativeName>
        <fullName evidence="1">UDP-N-acetylmuramoyl-L-alanine synthetase</fullName>
    </alternativeName>
</protein>
<gene>
    <name evidence="1" type="primary">murC</name>
    <name type="ordered locus">Pput_4386</name>
</gene>
<organism>
    <name type="scientific">Pseudomonas putida (strain ATCC 700007 / DSM 6899 / JCM 31910 / BCRC 17059 / LMG 24140 / F1)</name>
    <dbReference type="NCBI Taxonomy" id="351746"/>
    <lineage>
        <taxon>Bacteria</taxon>
        <taxon>Pseudomonadati</taxon>
        <taxon>Pseudomonadota</taxon>
        <taxon>Gammaproteobacteria</taxon>
        <taxon>Pseudomonadales</taxon>
        <taxon>Pseudomonadaceae</taxon>
        <taxon>Pseudomonas</taxon>
    </lineage>
</organism>